<name>FMT_CAMJJ</name>
<dbReference type="EC" id="2.1.2.9" evidence="1"/>
<dbReference type="EMBL" id="CP000538">
    <property type="protein sequence ID" value="EAQ72025.1"/>
    <property type="molecule type" value="Genomic_DNA"/>
</dbReference>
<dbReference type="RefSeq" id="WP_002857720.1">
    <property type="nucleotide sequence ID" value="NC_008787.1"/>
</dbReference>
<dbReference type="SMR" id="A1VXI1"/>
<dbReference type="KEGG" id="cjj:CJJ81176_0133"/>
<dbReference type="eggNOG" id="COG0223">
    <property type="taxonomic scope" value="Bacteria"/>
</dbReference>
<dbReference type="HOGENOM" id="CLU_033347_1_1_7"/>
<dbReference type="Proteomes" id="UP000000646">
    <property type="component" value="Chromosome"/>
</dbReference>
<dbReference type="GO" id="GO:0005829">
    <property type="term" value="C:cytosol"/>
    <property type="evidence" value="ECO:0007669"/>
    <property type="project" value="TreeGrafter"/>
</dbReference>
<dbReference type="GO" id="GO:0004479">
    <property type="term" value="F:methionyl-tRNA formyltransferase activity"/>
    <property type="evidence" value="ECO:0007669"/>
    <property type="project" value="UniProtKB-UniRule"/>
</dbReference>
<dbReference type="CDD" id="cd08646">
    <property type="entry name" value="FMT_core_Met-tRNA-FMT_N"/>
    <property type="match status" value="1"/>
</dbReference>
<dbReference type="CDD" id="cd08704">
    <property type="entry name" value="Met_tRNA_FMT_C"/>
    <property type="match status" value="1"/>
</dbReference>
<dbReference type="Gene3D" id="3.40.50.12230">
    <property type="match status" value="1"/>
</dbReference>
<dbReference type="HAMAP" id="MF_00182">
    <property type="entry name" value="Formyl_trans"/>
    <property type="match status" value="1"/>
</dbReference>
<dbReference type="InterPro" id="IPR005794">
    <property type="entry name" value="Fmt"/>
</dbReference>
<dbReference type="InterPro" id="IPR005793">
    <property type="entry name" value="Formyl_trans_C"/>
</dbReference>
<dbReference type="InterPro" id="IPR002376">
    <property type="entry name" value="Formyl_transf_N"/>
</dbReference>
<dbReference type="InterPro" id="IPR036477">
    <property type="entry name" value="Formyl_transf_N_sf"/>
</dbReference>
<dbReference type="InterPro" id="IPR011034">
    <property type="entry name" value="Formyl_transferase-like_C_sf"/>
</dbReference>
<dbReference type="InterPro" id="IPR001555">
    <property type="entry name" value="GART_AS"/>
</dbReference>
<dbReference type="InterPro" id="IPR044135">
    <property type="entry name" value="Met-tRNA-FMT_C"/>
</dbReference>
<dbReference type="InterPro" id="IPR041711">
    <property type="entry name" value="Met-tRNA-FMT_N"/>
</dbReference>
<dbReference type="NCBIfam" id="TIGR00460">
    <property type="entry name" value="fmt"/>
    <property type="match status" value="1"/>
</dbReference>
<dbReference type="PANTHER" id="PTHR11138">
    <property type="entry name" value="METHIONYL-TRNA FORMYLTRANSFERASE"/>
    <property type="match status" value="1"/>
</dbReference>
<dbReference type="PANTHER" id="PTHR11138:SF5">
    <property type="entry name" value="METHIONYL-TRNA FORMYLTRANSFERASE, MITOCHONDRIAL"/>
    <property type="match status" value="1"/>
</dbReference>
<dbReference type="Pfam" id="PF02911">
    <property type="entry name" value="Formyl_trans_C"/>
    <property type="match status" value="1"/>
</dbReference>
<dbReference type="Pfam" id="PF00551">
    <property type="entry name" value="Formyl_trans_N"/>
    <property type="match status" value="1"/>
</dbReference>
<dbReference type="SUPFAM" id="SSF50486">
    <property type="entry name" value="FMT C-terminal domain-like"/>
    <property type="match status" value="1"/>
</dbReference>
<dbReference type="SUPFAM" id="SSF53328">
    <property type="entry name" value="Formyltransferase"/>
    <property type="match status" value="1"/>
</dbReference>
<dbReference type="PROSITE" id="PS00373">
    <property type="entry name" value="GART"/>
    <property type="match status" value="1"/>
</dbReference>
<evidence type="ECO:0000255" key="1">
    <source>
        <dbReference type="HAMAP-Rule" id="MF_00182"/>
    </source>
</evidence>
<sequence>MKKIIFMGTPSYATCILKALVENENFKLVALFTQPDKAVGRKQILTPSDTKAFLSQNYPSIPIFTPSSLKDENIIREIKDLNPDFIVVAAYGKILPKAILDLVPCVNLHASLLPKYRGASPIQSAILNKDEKSGVCTMLMEEGLDTGAILESLECDIKDKNSSEVFELLANLAAKLILTTLLNFDKITPKKQEESLATLCRKIKKEDGLINLQNARELYQKYLAFTPWPGVFLENGLKFLELELVDELKQNARMGEILELEKESFLLACKQGVLRIKKLQESGKKALDGRTYLNGKRLKSEDSLC</sequence>
<reference key="1">
    <citation type="submission" date="2006-12" db="EMBL/GenBank/DDBJ databases">
        <authorList>
            <person name="Fouts D.E."/>
            <person name="Nelson K.E."/>
            <person name="Sebastian Y."/>
        </authorList>
    </citation>
    <scope>NUCLEOTIDE SEQUENCE [LARGE SCALE GENOMIC DNA]</scope>
    <source>
        <strain>81-176</strain>
    </source>
</reference>
<gene>
    <name evidence="1" type="primary">fmt</name>
    <name type="ordered locus">CJJ81176_0133</name>
</gene>
<comment type="function">
    <text evidence="1">Attaches a formyl group to the free amino group of methionyl-tRNA(fMet). The formyl group appears to play a dual role in the initiator identity of N-formylmethionyl-tRNA by promoting its recognition by IF2 and preventing the misappropriation of this tRNA by the elongation apparatus.</text>
</comment>
<comment type="catalytic activity">
    <reaction evidence="1">
        <text>L-methionyl-tRNA(fMet) + (6R)-10-formyltetrahydrofolate = N-formyl-L-methionyl-tRNA(fMet) + (6S)-5,6,7,8-tetrahydrofolate + H(+)</text>
        <dbReference type="Rhea" id="RHEA:24380"/>
        <dbReference type="Rhea" id="RHEA-COMP:9952"/>
        <dbReference type="Rhea" id="RHEA-COMP:9953"/>
        <dbReference type="ChEBI" id="CHEBI:15378"/>
        <dbReference type="ChEBI" id="CHEBI:57453"/>
        <dbReference type="ChEBI" id="CHEBI:78530"/>
        <dbReference type="ChEBI" id="CHEBI:78844"/>
        <dbReference type="ChEBI" id="CHEBI:195366"/>
        <dbReference type="EC" id="2.1.2.9"/>
    </reaction>
</comment>
<comment type="similarity">
    <text evidence="1">Belongs to the Fmt family.</text>
</comment>
<proteinExistence type="inferred from homology"/>
<keyword id="KW-0648">Protein biosynthesis</keyword>
<keyword id="KW-0808">Transferase</keyword>
<feature type="chain" id="PRO_1000020043" description="Methionyl-tRNA formyltransferase">
    <location>
        <begin position="1"/>
        <end position="305"/>
    </location>
</feature>
<feature type="binding site" evidence="1">
    <location>
        <begin position="111"/>
        <end position="114"/>
    </location>
    <ligand>
        <name>(6S)-5,6,7,8-tetrahydrofolate</name>
        <dbReference type="ChEBI" id="CHEBI:57453"/>
    </ligand>
</feature>
<organism>
    <name type="scientific">Campylobacter jejuni subsp. jejuni serotype O:23/36 (strain 81-176)</name>
    <dbReference type="NCBI Taxonomy" id="354242"/>
    <lineage>
        <taxon>Bacteria</taxon>
        <taxon>Pseudomonadati</taxon>
        <taxon>Campylobacterota</taxon>
        <taxon>Epsilonproteobacteria</taxon>
        <taxon>Campylobacterales</taxon>
        <taxon>Campylobacteraceae</taxon>
        <taxon>Campylobacter</taxon>
    </lineage>
</organism>
<protein>
    <recommendedName>
        <fullName evidence="1">Methionyl-tRNA formyltransferase</fullName>
        <ecNumber evidence="1">2.1.2.9</ecNumber>
    </recommendedName>
</protein>
<accession>A1VXI1</accession>